<proteinExistence type="inferred from homology"/>
<evidence type="ECO:0000255" key="1">
    <source>
        <dbReference type="HAMAP-Rule" id="MF_00361"/>
    </source>
</evidence>
<accession>Q1J6N4</accession>
<reference key="1">
    <citation type="journal article" date="2006" name="Proc. Natl. Acad. Sci. U.S.A.">
        <title>Molecular genetic anatomy of inter- and intraserotype variation in the human bacterial pathogen group A Streptococcus.</title>
        <authorList>
            <person name="Beres S.B."/>
            <person name="Richter E.W."/>
            <person name="Nagiec M.J."/>
            <person name="Sumby P."/>
            <person name="Porcella S.F."/>
            <person name="DeLeo F.R."/>
            <person name="Musser J.M."/>
        </authorList>
    </citation>
    <scope>NUCLEOTIDE SEQUENCE [LARGE SCALE GENOMIC DNA]</scope>
    <source>
        <strain>MGAS10750</strain>
    </source>
</reference>
<organism>
    <name type="scientific">Streptococcus pyogenes serotype M4 (strain MGAS10750)</name>
    <dbReference type="NCBI Taxonomy" id="370554"/>
    <lineage>
        <taxon>Bacteria</taxon>
        <taxon>Bacillati</taxon>
        <taxon>Bacillota</taxon>
        <taxon>Bacilli</taxon>
        <taxon>Lactobacillales</taxon>
        <taxon>Streptococcaceae</taxon>
        <taxon>Streptococcus</taxon>
    </lineage>
</organism>
<feature type="chain" id="PRO_1000005451" description="NAD kinase">
    <location>
        <begin position="1"/>
        <end position="279"/>
    </location>
</feature>
<feature type="active site" description="Proton acceptor" evidence="1">
    <location>
        <position position="57"/>
    </location>
</feature>
<feature type="binding site" evidence="1">
    <location>
        <begin position="57"/>
        <end position="58"/>
    </location>
    <ligand>
        <name>NAD(+)</name>
        <dbReference type="ChEBI" id="CHEBI:57540"/>
    </ligand>
</feature>
<feature type="binding site" evidence="1">
    <location>
        <begin position="133"/>
        <end position="134"/>
    </location>
    <ligand>
        <name>NAD(+)</name>
        <dbReference type="ChEBI" id="CHEBI:57540"/>
    </ligand>
</feature>
<feature type="binding site" evidence="1">
    <location>
        <position position="159"/>
    </location>
    <ligand>
        <name>NAD(+)</name>
        <dbReference type="ChEBI" id="CHEBI:57540"/>
    </ligand>
</feature>
<feature type="binding site" evidence="1">
    <location>
        <position position="161"/>
    </location>
    <ligand>
        <name>NAD(+)</name>
        <dbReference type="ChEBI" id="CHEBI:57540"/>
    </ligand>
</feature>
<feature type="binding site" evidence="1">
    <location>
        <begin position="172"/>
        <end position="177"/>
    </location>
    <ligand>
        <name>NAD(+)</name>
        <dbReference type="ChEBI" id="CHEBI:57540"/>
    </ligand>
</feature>
<protein>
    <recommendedName>
        <fullName evidence="1">NAD kinase</fullName>
        <ecNumber evidence="1">2.7.1.23</ecNumber>
    </recommendedName>
    <alternativeName>
        <fullName evidence="1">ATP-dependent NAD kinase</fullName>
    </alternativeName>
</protein>
<gene>
    <name evidence="1" type="primary">nadK</name>
    <name type="ordered locus">MGAS10750_Spy0999</name>
</gene>
<keyword id="KW-0067">ATP-binding</keyword>
<keyword id="KW-0963">Cytoplasm</keyword>
<keyword id="KW-0418">Kinase</keyword>
<keyword id="KW-0520">NAD</keyword>
<keyword id="KW-0521">NADP</keyword>
<keyword id="KW-0547">Nucleotide-binding</keyword>
<keyword id="KW-0808">Transferase</keyword>
<dbReference type="EC" id="2.7.1.23" evidence="1"/>
<dbReference type="EMBL" id="CP000262">
    <property type="protein sequence ID" value="ABF37949.1"/>
    <property type="molecule type" value="Genomic_DNA"/>
</dbReference>
<dbReference type="SMR" id="Q1J6N4"/>
<dbReference type="KEGG" id="spi:MGAS10750_Spy0999"/>
<dbReference type="HOGENOM" id="CLU_008831_0_3_9"/>
<dbReference type="Proteomes" id="UP000002434">
    <property type="component" value="Chromosome"/>
</dbReference>
<dbReference type="GO" id="GO:0005737">
    <property type="term" value="C:cytoplasm"/>
    <property type="evidence" value="ECO:0007669"/>
    <property type="project" value="UniProtKB-SubCell"/>
</dbReference>
<dbReference type="GO" id="GO:0005524">
    <property type="term" value="F:ATP binding"/>
    <property type="evidence" value="ECO:0007669"/>
    <property type="project" value="UniProtKB-KW"/>
</dbReference>
<dbReference type="GO" id="GO:0046872">
    <property type="term" value="F:metal ion binding"/>
    <property type="evidence" value="ECO:0007669"/>
    <property type="project" value="UniProtKB-UniRule"/>
</dbReference>
<dbReference type="GO" id="GO:0051287">
    <property type="term" value="F:NAD binding"/>
    <property type="evidence" value="ECO:0007669"/>
    <property type="project" value="UniProtKB-ARBA"/>
</dbReference>
<dbReference type="GO" id="GO:0003951">
    <property type="term" value="F:NAD+ kinase activity"/>
    <property type="evidence" value="ECO:0007669"/>
    <property type="project" value="UniProtKB-UniRule"/>
</dbReference>
<dbReference type="GO" id="GO:0019674">
    <property type="term" value="P:NAD metabolic process"/>
    <property type="evidence" value="ECO:0007669"/>
    <property type="project" value="InterPro"/>
</dbReference>
<dbReference type="GO" id="GO:0006741">
    <property type="term" value="P:NADP biosynthetic process"/>
    <property type="evidence" value="ECO:0007669"/>
    <property type="project" value="UniProtKB-UniRule"/>
</dbReference>
<dbReference type="Gene3D" id="3.40.50.10330">
    <property type="entry name" value="Probable inorganic polyphosphate/atp-NAD kinase, domain 1"/>
    <property type="match status" value="1"/>
</dbReference>
<dbReference type="Gene3D" id="2.60.200.30">
    <property type="entry name" value="Probable inorganic polyphosphate/atp-NAD kinase, domain 2"/>
    <property type="match status" value="1"/>
</dbReference>
<dbReference type="HAMAP" id="MF_00361">
    <property type="entry name" value="NAD_kinase"/>
    <property type="match status" value="1"/>
</dbReference>
<dbReference type="InterPro" id="IPR017438">
    <property type="entry name" value="ATP-NAD_kinase_N"/>
</dbReference>
<dbReference type="InterPro" id="IPR017437">
    <property type="entry name" value="ATP-NAD_kinase_PpnK-typ_C"/>
</dbReference>
<dbReference type="InterPro" id="IPR016064">
    <property type="entry name" value="NAD/diacylglycerol_kinase_sf"/>
</dbReference>
<dbReference type="InterPro" id="IPR002504">
    <property type="entry name" value="NADK"/>
</dbReference>
<dbReference type="NCBIfam" id="NF003424">
    <property type="entry name" value="PRK04885.1"/>
    <property type="match status" value="1"/>
</dbReference>
<dbReference type="PANTHER" id="PTHR20275">
    <property type="entry name" value="NAD KINASE"/>
    <property type="match status" value="1"/>
</dbReference>
<dbReference type="PANTHER" id="PTHR20275:SF0">
    <property type="entry name" value="NAD KINASE"/>
    <property type="match status" value="1"/>
</dbReference>
<dbReference type="Pfam" id="PF01513">
    <property type="entry name" value="NAD_kinase"/>
    <property type="match status" value="1"/>
</dbReference>
<dbReference type="Pfam" id="PF20143">
    <property type="entry name" value="NAD_kinase_C"/>
    <property type="match status" value="1"/>
</dbReference>
<dbReference type="SUPFAM" id="SSF111331">
    <property type="entry name" value="NAD kinase/diacylglycerol kinase-like"/>
    <property type="match status" value="1"/>
</dbReference>
<comment type="function">
    <text evidence="1">Involved in the regulation of the intracellular balance of NAD and NADP, and is a key enzyme in the biosynthesis of NADP. Catalyzes specifically the phosphorylation on 2'-hydroxyl of the adenosine moiety of NAD to yield NADP.</text>
</comment>
<comment type="catalytic activity">
    <reaction evidence="1">
        <text>NAD(+) + ATP = ADP + NADP(+) + H(+)</text>
        <dbReference type="Rhea" id="RHEA:18629"/>
        <dbReference type="ChEBI" id="CHEBI:15378"/>
        <dbReference type="ChEBI" id="CHEBI:30616"/>
        <dbReference type="ChEBI" id="CHEBI:57540"/>
        <dbReference type="ChEBI" id="CHEBI:58349"/>
        <dbReference type="ChEBI" id="CHEBI:456216"/>
        <dbReference type="EC" id="2.7.1.23"/>
    </reaction>
</comment>
<comment type="cofactor">
    <cofactor evidence="1">
        <name>a divalent metal cation</name>
        <dbReference type="ChEBI" id="CHEBI:60240"/>
    </cofactor>
</comment>
<comment type="subcellular location">
    <subcellularLocation>
        <location evidence="1">Cytoplasm</location>
    </subcellularLocation>
</comment>
<comment type="similarity">
    <text evidence="1">Belongs to the NAD kinase family.</text>
</comment>
<sequence length="279" mass="31507">MMTQMNYTGKVKRVAIIANGKYQSKRVASKLFSVFKDDPDFYLSKKNPDIVISIGGDGMLLSAFHMYEKELDKVRFVGIHTGHLGFYTDYRDFEVDKLIDNLRKDKGEQISYPILKVAITLDDGRVVKARALNEATVKRIEKTMVADVIINHVKFESFRGDGISVSTPTGSTAYNKSLGGAVLHPTIEALQLTEISSLNNRVFRTLGSSIIIPKKDKIELVPKRLGIYTISIDNKTYQLKNVTKVEYFIDDEKIHFVSSPSHTSFWERVKDAFIGEIDS</sequence>
<name>NADK_STRPF</name>